<feature type="transit peptide" description="Mitochondrion" evidence="2">
    <location>
        <begin position="1"/>
        <end status="unknown"/>
    </location>
</feature>
<feature type="chain" id="PRO_0000351051" description="Sensitive to high expression protein 9 homolog, mitochondrial">
    <location>
        <begin status="unknown"/>
        <end position="466"/>
    </location>
</feature>
<feature type="topological domain" description="Mitochondrial matrix" evidence="2">
    <location>
        <begin status="unknown"/>
        <end position="294"/>
    </location>
</feature>
<feature type="transmembrane region" description="Helical" evidence="2">
    <location>
        <begin position="295"/>
        <end position="315"/>
    </location>
</feature>
<feature type="topological domain" description="Mitochondrial intermembrane" evidence="2">
    <location>
        <begin position="316"/>
        <end position="442"/>
    </location>
</feature>
<feature type="transmembrane region" description="Helical" evidence="2">
    <location>
        <begin position="443"/>
        <end position="463"/>
    </location>
</feature>
<feature type="topological domain" description="Mitochondrial matrix" evidence="2">
    <location>
        <begin position="464"/>
        <end position="466"/>
    </location>
</feature>
<feature type="region of interest" description="Disordered" evidence="3">
    <location>
        <begin position="59"/>
        <end position="134"/>
    </location>
</feature>
<feature type="region of interest" description="Disordered" evidence="3">
    <location>
        <begin position="366"/>
        <end position="388"/>
    </location>
</feature>
<feature type="coiled-coil region" evidence="2">
    <location>
        <begin position="173"/>
        <end position="275"/>
    </location>
</feature>
<feature type="compositionally biased region" description="Basic and acidic residues" evidence="3">
    <location>
        <begin position="65"/>
        <end position="81"/>
    </location>
</feature>
<feature type="compositionally biased region" description="Low complexity" evidence="3">
    <location>
        <begin position="99"/>
        <end position="112"/>
    </location>
</feature>
<comment type="function">
    <text evidence="1">Required for the maintenance of the structure of the mitochondrial inner membrane. Involved in mitochondrial morphology. Causes growth arrest when highly overexpressed (By similarity).</text>
</comment>
<comment type="subunit">
    <text evidence="1">Homooligomer.</text>
</comment>
<comment type="subcellular location">
    <subcellularLocation>
        <location evidence="1">Mitochondrion inner membrane</location>
        <topology evidence="1">Multi-pass membrane protein</topology>
    </subcellularLocation>
</comment>
<comment type="similarity">
    <text evidence="4">Belongs to the SHE9 family.</text>
</comment>
<dbReference type="EMBL" id="CH476604">
    <property type="protein sequence ID" value="EAU31876.1"/>
    <property type="molecule type" value="Genomic_DNA"/>
</dbReference>
<dbReference type="RefSeq" id="XP_001216235.1">
    <property type="nucleotide sequence ID" value="XM_001216235.1"/>
</dbReference>
<dbReference type="EnsemblFungi" id="EAU31876">
    <property type="protein sequence ID" value="EAU31876"/>
    <property type="gene ID" value="ATEG_07614"/>
</dbReference>
<dbReference type="GeneID" id="4322576"/>
<dbReference type="VEuPathDB" id="FungiDB:ATEG_07614"/>
<dbReference type="eggNOG" id="ENOG502QQ1E">
    <property type="taxonomic scope" value="Eukaryota"/>
</dbReference>
<dbReference type="HOGENOM" id="CLU_025632_2_0_1"/>
<dbReference type="OMA" id="ERYMALI"/>
<dbReference type="OrthoDB" id="5595506at2759"/>
<dbReference type="Proteomes" id="UP000007963">
    <property type="component" value="Unassembled WGS sequence"/>
</dbReference>
<dbReference type="GO" id="GO:0005743">
    <property type="term" value="C:mitochondrial inner membrane"/>
    <property type="evidence" value="ECO:0007669"/>
    <property type="project" value="UniProtKB-SubCell"/>
</dbReference>
<dbReference type="GO" id="GO:0007007">
    <property type="term" value="P:inner mitochondrial membrane organization"/>
    <property type="evidence" value="ECO:0007669"/>
    <property type="project" value="TreeGrafter"/>
</dbReference>
<dbReference type="InterPro" id="IPR008839">
    <property type="entry name" value="MDM33_fungi"/>
</dbReference>
<dbReference type="PANTHER" id="PTHR31961">
    <property type="entry name" value="SENSITIVE TO HIGH EXPRESSION PROTEIN 9, MITOCHONDRIAL"/>
    <property type="match status" value="1"/>
</dbReference>
<dbReference type="PANTHER" id="PTHR31961:SF3">
    <property type="entry name" value="SENSITIVE TO HIGH EXPRESSION PROTEIN 9, MITOCHONDRIAL"/>
    <property type="match status" value="1"/>
</dbReference>
<dbReference type="Pfam" id="PF05546">
    <property type="entry name" value="She9_MDM33"/>
    <property type="match status" value="1"/>
</dbReference>
<organism>
    <name type="scientific">Aspergillus terreus (strain NIH 2624 / FGSC A1156)</name>
    <dbReference type="NCBI Taxonomy" id="341663"/>
    <lineage>
        <taxon>Eukaryota</taxon>
        <taxon>Fungi</taxon>
        <taxon>Dikarya</taxon>
        <taxon>Ascomycota</taxon>
        <taxon>Pezizomycotina</taxon>
        <taxon>Eurotiomycetes</taxon>
        <taxon>Eurotiomycetidae</taxon>
        <taxon>Eurotiales</taxon>
        <taxon>Aspergillaceae</taxon>
        <taxon>Aspergillus</taxon>
        <taxon>Aspergillus subgen. Circumdati</taxon>
    </lineage>
</organism>
<reference key="1">
    <citation type="submission" date="2005-09" db="EMBL/GenBank/DDBJ databases">
        <title>Annotation of the Aspergillus terreus NIH2624 genome.</title>
        <authorList>
            <person name="Birren B.W."/>
            <person name="Lander E.S."/>
            <person name="Galagan J.E."/>
            <person name="Nusbaum C."/>
            <person name="Devon K."/>
            <person name="Henn M."/>
            <person name="Ma L.-J."/>
            <person name="Jaffe D.B."/>
            <person name="Butler J."/>
            <person name="Alvarez P."/>
            <person name="Gnerre S."/>
            <person name="Grabherr M."/>
            <person name="Kleber M."/>
            <person name="Mauceli E.W."/>
            <person name="Brockman W."/>
            <person name="Rounsley S."/>
            <person name="Young S.K."/>
            <person name="LaButti K."/>
            <person name="Pushparaj V."/>
            <person name="DeCaprio D."/>
            <person name="Crawford M."/>
            <person name="Koehrsen M."/>
            <person name="Engels R."/>
            <person name="Montgomery P."/>
            <person name="Pearson M."/>
            <person name="Howarth C."/>
            <person name="Larson L."/>
            <person name="Luoma S."/>
            <person name="White J."/>
            <person name="Alvarado L."/>
            <person name="Kodira C.D."/>
            <person name="Zeng Q."/>
            <person name="Oleary S."/>
            <person name="Yandava C."/>
            <person name="Denning D.W."/>
            <person name="Nierman W.C."/>
            <person name="Milne T."/>
            <person name="Madden K."/>
        </authorList>
    </citation>
    <scope>NUCLEOTIDE SEQUENCE [LARGE SCALE GENOMIC DNA]</scope>
    <source>
        <strain>NIH 2624 / FGSC A1156</strain>
    </source>
</reference>
<protein>
    <recommendedName>
        <fullName>Sensitive to high expression protein 9 homolog, mitochondrial</fullName>
    </recommendedName>
</protein>
<proteinExistence type="inferred from homology"/>
<keyword id="KW-0175">Coiled coil</keyword>
<keyword id="KW-0472">Membrane</keyword>
<keyword id="KW-0496">Mitochondrion</keyword>
<keyword id="KW-0999">Mitochondrion inner membrane</keyword>
<keyword id="KW-1185">Reference proteome</keyword>
<keyword id="KW-0809">Transit peptide</keyword>
<keyword id="KW-0812">Transmembrane</keyword>
<keyword id="KW-1133">Transmembrane helix</keyword>
<name>SHE9_ASPTN</name>
<sequence>MHSLPLLLRQSLRSTGALSRSAHRPIRAPPLPSHLLRLPTAHPRPFSVCLQCQFRTQSASYPPNKESDKPLDTETPSKHPDSTASFLEESLKTQAEAGTPADSTTTTTTTTTSPPPQPTPNEPKTADSSLRDTLPSYLDNRRSQFSKQFTTMMDNLQSNIFVAGQRLNDLTGYSEIEALKKEIHTQEDRLRAARLHVRNAKEAYASAINRRSASQREVNELLQRKHAWSPVDLERFTHLYRNDHTNEVAENEAQEALTAAEREAEEAAAQLSKSILSRYHEEQVWSDKIRRMSTWGTWGLMGVNVLLFLVFQIAVEPWRRKRLVKGFEEKVIEAIEKEREMNHVEILSPTAAAATAGAVAPVEAAGEDAAPAPVEEETTSDGASVVEDTTGGVVEDRADLAHESYKAQLPSLPSTLSVDSWRQYLHDLFSERSMIITQRDLSSVALQSAAAGAAVMGLVIALIRPR</sequence>
<evidence type="ECO:0000250" key="1"/>
<evidence type="ECO:0000255" key="2"/>
<evidence type="ECO:0000256" key="3">
    <source>
        <dbReference type="SAM" id="MobiDB-lite"/>
    </source>
</evidence>
<evidence type="ECO:0000305" key="4"/>
<gene>
    <name type="primary">she9</name>
    <name type="ORF">ATEG_07614</name>
</gene>
<accession>Q0CFC0</accession>